<proteinExistence type="inferred from homology"/>
<accession>A1ADX7</accession>
<comment type="function">
    <text evidence="1">Catalyzes the hydrolysis of N-succinyl-L,L-diaminopimelic acid (SDAP), forming succinate and LL-2,6-diaminopimelate (DAP), an intermediate involved in the bacterial biosynthesis of lysine and meso-diaminopimelic acid, an essential component of bacterial cell walls.</text>
</comment>
<comment type="catalytic activity">
    <reaction evidence="1">
        <text>N-succinyl-(2S,6S)-2,6-diaminopimelate + H2O = (2S,6S)-2,6-diaminopimelate + succinate</text>
        <dbReference type="Rhea" id="RHEA:22608"/>
        <dbReference type="ChEBI" id="CHEBI:15377"/>
        <dbReference type="ChEBI" id="CHEBI:30031"/>
        <dbReference type="ChEBI" id="CHEBI:57609"/>
        <dbReference type="ChEBI" id="CHEBI:58087"/>
        <dbReference type="EC" id="3.5.1.18"/>
    </reaction>
</comment>
<comment type="cofactor">
    <cofactor evidence="1">
        <name>Zn(2+)</name>
        <dbReference type="ChEBI" id="CHEBI:29105"/>
    </cofactor>
    <cofactor evidence="1">
        <name>Co(2+)</name>
        <dbReference type="ChEBI" id="CHEBI:48828"/>
    </cofactor>
    <text evidence="1">Binds 2 Zn(2+) or Co(2+) ions per subunit.</text>
</comment>
<comment type="pathway">
    <text evidence="1">Amino-acid biosynthesis; L-lysine biosynthesis via DAP pathway; LL-2,6-diaminopimelate from (S)-tetrahydrodipicolinate (succinylase route): step 3/3.</text>
</comment>
<comment type="subunit">
    <text evidence="1">Homodimer.</text>
</comment>
<comment type="similarity">
    <text evidence="1">Belongs to the peptidase M20A family. DapE subfamily.</text>
</comment>
<sequence>MSCPVIELTQQLIRRPSLSPDDAGCQALLIERLQAIGFTVERMDFADTQNFWAWRGQGETLAFAGHTDVVPPGDADRWINPPFEPTIRDGMLFGRGAADMKGSLAAMVVAAERFVAQHPNHTGRLAFLITSDEEASAHNGTVKVVEALMARNERLDYCLVGEPSSIEVVGDVVKNGRRGSLTCNLTIHGVQGHVAYPHLADNPVHRAAPFINELVAIEWDQGNEFFPATSMQIANIQAGTGSNNVIPGELFVQFNFRFSTELTDEMIKAQVLALLEKHQLRYTVDWWLSGQPFLTARGKLVDAVVNAVEHYNEIKPQLLTTGGTSDGRFIARMGAQVVELGPVNATIHKINECVNAADLQLLARMYQRIMEQLVA</sequence>
<gene>
    <name evidence="1" type="primary">dapE</name>
    <name type="ordered locus">Ecok1_23730</name>
    <name type="ORF">APECO1_4085</name>
</gene>
<name>DAPE_ECOK1</name>
<organism>
    <name type="scientific">Escherichia coli O1:K1 / APEC</name>
    <dbReference type="NCBI Taxonomy" id="405955"/>
    <lineage>
        <taxon>Bacteria</taxon>
        <taxon>Pseudomonadati</taxon>
        <taxon>Pseudomonadota</taxon>
        <taxon>Gammaproteobacteria</taxon>
        <taxon>Enterobacterales</taxon>
        <taxon>Enterobacteriaceae</taxon>
        <taxon>Escherichia</taxon>
    </lineage>
</organism>
<evidence type="ECO:0000255" key="1">
    <source>
        <dbReference type="HAMAP-Rule" id="MF_01690"/>
    </source>
</evidence>
<protein>
    <recommendedName>
        <fullName evidence="1">Succinyl-diaminopimelate desuccinylase</fullName>
        <shortName evidence="1">SDAP desuccinylase</shortName>
        <ecNumber evidence="1">3.5.1.18</ecNumber>
    </recommendedName>
    <alternativeName>
        <fullName evidence="1">N-succinyl-LL-2,6-diaminoheptanedioate amidohydrolase</fullName>
    </alternativeName>
</protein>
<dbReference type="EC" id="3.5.1.18" evidence="1"/>
<dbReference type="EMBL" id="CP000468">
    <property type="protein sequence ID" value="ABJ01867.1"/>
    <property type="molecule type" value="Genomic_DNA"/>
</dbReference>
<dbReference type="RefSeq" id="WP_001277797.1">
    <property type="nucleotide sequence ID" value="NZ_CADILS010000040.1"/>
</dbReference>
<dbReference type="SMR" id="A1ADX7"/>
<dbReference type="MEROPS" id="M20.010"/>
<dbReference type="KEGG" id="ecv:APECO1_4085"/>
<dbReference type="HOGENOM" id="CLU_021802_4_0_6"/>
<dbReference type="UniPathway" id="UPA00034">
    <property type="reaction ID" value="UER00021"/>
</dbReference>
<dbReference type="Proteomes" id="UP000008216">
    <property type="component" value="Chromosome"/>
</dbReference>
<dbReference type="GO" id="GO:0008777">
    <property type="term" value="F:acetylornithine deacetylase activity"/>
    <property type="evidence" value="ECO:0007669"/>
    <property type="project" value="TreeGrafter"/>
</dbReference>
<dbReference type="GO" id="GO:0050897">
    <property type="term" value="F:cobalt ion binding"/>
    <property type="evidence" value="ECO:0007669"/>
    <property type="project" value="UniProtKB-UniRule"/>
</dbReference>
<dbReference type="GO" id="GO:0009014">
    <property type="term" value="F:succinyl-diaminopimelate desuccinylase activity"/>
    <property type="evidence" value="ECO:0007669"/>
    <property type="project" value="UniProtKB-UniRule"/>
</dbReference>
<dbReference type="GO" id="GO:0008270">
    <property type="term" value="F:zinc ion binding"/>
    <property type="evidence" value="ECO:0007669"/>
    <property type="project" value="UniProtKB-UniRule"/>
</dbReference>
<dbReference type="GO" id="GO:0019877">
    <property type="term" value="P:diaminopimelate biosynthetic process"/>
    <property type="evidence" value="ECO:0007669"/>
    <property type="project" value="UniProtKB-UniRule"/>
</dbReference>
<dbReference type="GO" id="GO:0006526">
    <property type="term" value="P:L-arginine biosynthetic process"/>
    <property type="evidence" value="ECO:0007669"/>
    <property type="project" value="TreeGrafter"/>
</dbReference>
<dbReference type="GO" id="GO:0009089">
    <property type="term" value="P:lysine biosynthetic process via diaminopimelate"/>
    <property type="evidence" value="ECO:0007669"/>
    <property type="project" value="UniProtKB-UniRule"/>
</dbReference>
<dbReference type="CDD" id="cd03891">
    <property type="entry name" value="M20_DapE_proteobac"/>
    <property type="match status" value="1"/>
</dbReference>
<dbReference type="FunFam" id="3.30.70.360:FF:000011">
    <property type="entry name" value="Succinyl-diaminopimelate desuccinylase"/>
    <property type="match status" value="1"/>
</dbReference>
<dbReference type="FunFam" id="3.40.630.10:FF:000005">
    <property type="entry name" value="Succinyl-diaminopimelate desuccinylase"/>
    <property type="match status" value="1"/>
</dbReference>
<dbReference type="FunFam" id="3.40.630.10:FF:000010">
    <property type="entry name" value="Succinyl-diaminopimelate desuccinylase"/>
    <property type="match status" value="1"/>
</dbReference>
<dbReference type="Gene3D" id="3.40.630.10">
    <property type="entry name" value="Zn peptidases"/>
    <property type="match status" value="2"/>
</dbReference>
<dbReference type="HAMAP" id="MF_01690">
    <property type="entry name" value="DapE"/>
    <property type="match status" value="1"/>
</dbReference>
<dbReference type="InterPro" id="IPR001261">
    <property type="entry name" value="ArgE/DapE_CS"/>
</dbReference>
<dbReference type="InterPro" id="IPR036264">
    <property type="entry name" value="Bact_exopeptidase_dim_dom"/>
</dbReference>
<dbReference type="InterPro" id="IPR005941">
    <property type="entry name" value="DapE_proteobac"/>
</dbReference>
<dbReference type="InterPro" id="IPR002933">
    <property type="entry name" value="Peptidase_M20"/>
</dbReference>
<dbReference type="InterPro" id="IPR011650">
    <property type="entry name" value="Peptidase_M20_dimer"/>
</dbReference>
<dbReference type="InterPro" id="IPR050072">
    <property type="entry name" value="Peptidase_M20A"/>
</dbReference>
<dbReference type="NCBIfam" id="TIGR01246">
    <property type="entry name" value="dapE_proteo"/>
    <property type="match status" value="1"/>
</dbReference>
<dbReference type="NCBIfam" id="NF009557">
    <property type="entry name" value="PRK13009.1"/>
    <property type="match status" value="1"/>
</dbReference>
<dbReference type="PANTHER" id="PTHR43808">
    <property type="entry name" value="ACETYLORNITHINE DEACETYLASE"/>
    <property type="match status" value="1"/>
</dbReference>
<dbReference type="PANTHER" id="PTHR43808:SF31">
    <property type="entry name" value="N-ACETYL-L-CITRULLINE DEACETYLASE"/>
    <property type="match status" value="1"/>
</dbReference>
<dbReference type="Pfam" id="PF07687">
    <property type="entry name" value="M20_dimer"/>
    <property type="match status" value="1"/>
</dbReference>
<dbReference type="Pfam" id="PF01546">
    <property type="entry name" value="Peptidase_M20"/>
    <property type="match status" value="1"/>
</dbReference>
<dbReference type="SUPFAM" id="SSF55031">
    <property type="entry name" value="Bacterial exopeptidase dimerisation domain"/>
    <property type="match status" value="1"/>
</dbReference>
<dbReference type="SUPFAM" id="SSF53187">
    <property type="entry name" value="Zn-dependent exopeptidases"/>
    <property type="match status" value="1"/>
</dbReference>
<dbReference type="PROSITE" id="PS00758">
    <property type="entry name" value="ARGE_DAPE_CPG2_1"/>
    <property type="match status" value="1"/>
</dbReference>
<dbReference type="PROSITE" id="PS00759">
    <property type="entry name" value="ARGE_DAPE_CPG2_2"/>
    <property type="match status" value="1"/>
</dbReference>
<reference key="1">
    <citation type="journal article" date="2007" name="J. Bacteriol.">
        <title>The genome sequence of avian pathogenic Escherichia coli strain O1:K1:H7 shares strong similarities with human extraintestinal pathogenic E. coli genomes.</title>
        <authorList>
            <person name="Johnson T.J."/>
            <person name="Kariyawasam S."/>
            <person name="Wannemuehler Y."/>
            <person name="Mangiamele P."/>
            <person name="Johnson S.J."/>
            <person name="Doetkott C."/>
            <person name="Skyberg J.A."/>
            <person name="Lynne A.M."/>
            <person name="Johnson J.R."/>
            <person name="Nolan L.K."/>
        </authorList>
    </citation>
    <scope>NUCLEOTIDE SEQUENCE [LARGE SCALE GENOMIC DNA]</scope>
</reference>
<feature type="chain" id="PRO_0000375564" description="Succinyl-diaminopimelate desuccinylase">
    <location>
        <begin position="1"/>
        <end position="375"/>
    </location>
</feature>
<feature type="active site" evidence="1">
    <location>
        <position position="68"/>
    </location>
</feature>
<feature type="active site" description="Proton acceptor" evidence="1">
    <location>
        <position position="133"/>
    </location>
</feature>
<feature type="binding site" evidence="1">
    <location>
        <position position="66"/>
    </location>
    <ligand>
        <name>Zn(2+)</name>
        <dbReference type="ChEBI" id="CHEBI:29105"/>
        <label>1</label>
    </ligand>
</feature>
<feature type="binding site" evidence="1">
    <location>
        <position position="99"/>
    </location>
    <ligand>
        <name>Zn(2+)</name>
        <dbReference type="ChEBI" id="CHEBI:29105"/>
        <label>1</label>
    </ligand>
</feature>
<feature type="binding site" evidence="1">
    <location>
        <position position="99"/>
    </location>
    <ligand>
        <name>Zn(2+)</name>
        <dbReference type="ChEBI" id="CHEBI:29105"/>
        <label>2</label>
    </ligand>
</feature>
<feature type="binding site" evidence="1">
    <location>
        <position position="134"/>
    </location>
    <ligand>
        <name>Zn(2+)</name>
        <dbReference type="ChEBI" id="CHEBI:29105"/>
        <label>2</label>
    </ligand>
</feature>
<feature type="binding site" evidence="1">
    <location>
        <position position="162"/>
    </location>
    <ligand>
        <name>Zn(2+)</name>
        <dbReference type="ChEBI" id="CHEBI:29105"/>
        <label>1</label>
    </ligand>
</feature>
<feature type="binding site" evidence="1">
    <location>
        <position position="348"/>
    </location>
    <ligand>
        <name>Zn(2+)</name>
        <dbReference type="ChEBI" id="CHEBI:29105"/>
        <label>2</label>
    </ligand>
</feature>
<keyword id="KW-0028">Amino-acid biosynthesis</keyword>
<keyword id="KW-0170">Cobalt</keyword>
<keyword id="KW-0220">Diaminopimelate biosynthesis</keyword>
<keyword id="KW-0378">Hydrolase</keyword>
<keyword id="KW-0457">Lysine biosynthesis</keyword>
<keyword id="KW-0479">Metal-binding</keyword>
<keyword id="KW-1185">Reference proteome</keyword>
<keyword id="KW-0862">Zinc</keyword>